<keyword id="KW-0903">Direct protein sequencing</keyword>
<keyword id="KW-0328">Glycosyltransferase</keyword>
<keyword id="KW-0808">Transferase</keyword>
<comment type="function">
    <text>Specifically glucosylates the 3'-hydroxy group of delphinidin 3,5-di-O-glucoside to produce gentiodelphin. Shows a strict specificity for UDP-glucose as donor.</text>
</comment>
<comment type="catalytic activity">
    <reaction>
        <text>delphinidin 3,5-bis-O-beta-D-glucoside + UDP-alpha-D-glucose = delphinidin 3,3',5-tri-O-beta-D-glucoside + UDP + H(+)</text>
        <dbReference type="Rhea" id="RHEA:35627"/>
        <dbReference type="ChEBI" id="CHEBI:15378"/>
        <dbReference type="ChEBI" id="CHEBI:58223"/>
        <dbReference type="ChEBI" id="CHEBI:58885"/>
        <dbReference type="ChEBI" id="CHEBI:77838"/>
        <dbReference type="ChEBI" id="CHEBI:77844"/>
        <dbReference type="EC" id="2.4.1.238"/>
    </reaction>
</comment>
<comment type="biophysicochemical properties">
    <kinetics>
        <KM evidence="3">120 uM for delphinidin 3,5-di-O-glucoside</KM>
        <Vmax evidence="3">1370.0 nmol/min/mg enzyme</Vmax>
    </kinetics>
</comment>
<comment type="tissue specificity">
    <text evidence="3">Abundant in petals and barely detected in leaves.</text>
</comment>
<comment type="developmental stage">
    <text evidence="3">Expressed early in petals development and decreases in fully opened flowers.</text>
</comment>
<comment type="induction">
    <text evidence="3">Significantly inhibited by Al(3+) and Co(2+), moderately by Zn(2+) and not by Mg(2+), Ca(2+), Mn(2+), EDAT or EGTA. Competitively inhibited by UDP.</text>
</comment>
<comment type="PTM">
    <text>The N-terminus is blocked.</text>
</comment>
<comment type="similarity">
    <text evidence="4">Belongs to the UDP-glycosyltransferase family.</text>
</comment>
<evidence type="ECO:0000250" key="1">
    <source>
        <dbReference type="UniProtKB" id="A0A0A1HA03"/>
    </source>
</evidence>
<evidence type="ECO:0000250" key="2">
    <source>
        <dbReference type="UniProtKB" id="P51094"/>
    </source>
</evidence>
<evidence type="ECO:0000269" key="3">
    <source>
    </source>
</evidence>
<evidence type="ECO:0000305" key="4"/>
<dbReference type="EC" id="2.4.1.238"/>
<dbReference type="EMBL" id="AB076697">
    <property type="protein sequence ID" value="BAC54092.1"/>
    <property type="molecule type" value="mRNA"/>
</dbReference>
<dbReference type="SMR" id="Q8H0F2"/>
<dbReference type="CAZy" id="GT1">
    <property type="family name" value="Glycosyltransferase Family 1"/>
</dbReference>
<dbReference type="KEGG" id="ag:BAC54092"/>
<dbReference type="BRENDA" id="2.4.1.238">
    <property type="organism ID" value="2412"/>
</dbReference>
<dbReference type="SABIO-RK" id="Q8H0F2"/>
<dbReference type="GO" id="GO:0033837">
    <property type="term" value="F:anthocyanin 3'-O-beta-glucosyltransferase activity"/>
    <property type="evidence" value="ECO:0007669"/>
    <property type="project" value="UniProtKB-EC"/>
</dbReference>
<dbReference type="GO" id="GO:0035251">
    <property type="term" value="F:UDP-glucosyltransferase activity"/>
    <property type="evidence" value="ECO:0007669"/>
    <property type="project" value="TreeGrafter"/>
</dbReference>
<dbReference type="CDD" id="cd03784">
    <property type="entry name" value="GT1_Gtf-like"/>
    <property type="match status" value="1"/>
</dbReference>
<dbReference type="FunFam" id="3.40.50.2000:FF:000047">
    <property type="entry name" value="Glycosyltransferase"/>
    <property type="match status" value="1"/>
</dbReference>
<dbReference type="FunFam" id="3.40.50.2000:FF:000071">
    <property type="entry name" value="Glycosyltransferase"/>
    <property type="match status" value="1"/>
</dbReference>
<dbReference type="Gene3D" id="3.40.50.2000">
    <property type="entry name" value="Glycogen Phosphorylase B"/>
    <property type="match status" value="2"/>
</dbReference>
<dbReference type="InterPro" id="IPR002213">
    <property type="entry name" value="UDP_glucos_trans"/>
</dbReference>
<dbReference type="PANTHER" id="PTHR48047">
    <property type="entry name" value="GLYCOSYLTRANSFERASE"/>
    <property type="match status" value="1"/>
</dbReference>
<dbReference type="PANTHER" id="PTHR48047:SF45">
    <property type="entry name" value="SCOPOLETIN GLUCOSYLTRANSFERASE-LIKE"/>
    <property type="match status" value="1"/>
</dbReference>
<dbReference type="Pfam" id="PF00201">
    <property type="entry name" value="UDPGT"/>
    <property type="match status" value="1"/>
</dbReference>
<dbReference type="SUPFAM" id="SSF53756">
    <property type="entry name" value="UDP-Glycosyltransferase/glycogen phosphorylase"/>
    <property type="match status" value="1"/>
</dbReference>
<feature type="chain" id="PRO_0000310729" description="Anthocyanin 3'-O-beta-glucosyltransferase">
    <location>
        <begin position="1"/>
        <end position="482"/>
    </location>
</feature>
<feature type="active site" description="Proton acceptor" evidence="1">
    <location>
        <position position="16"/>
    </location>
</feature>
<feature type="active site" description="Charge relay" evidence="1">
    <location>
        <position position="119"/>
    </location>
</feature>
<feature type="binding site" evidence="2">
    <location>
        <position position="16"/>
    </location>
    <ligand>
        <name>an anthocyanidin</name>
        <dbReference type="ChEBI" id="CHEBI:143576"/>
    </ligand>
</feature>
<feature type="binding site" evidence="1">
    <location>
        <position position="349"/>
    </location>
    <ligand>
        <name>UDP-alpha-D-glucose</name>
        <dbReference type="ChEBI" id="CHEBI:58885"/>
    </ligand>
</feature>
<feature type="binding site" evidence="1">
    <location>
        <position position="351"/>
    </location>
    <ligand>
        <name>UDP-alpha-D-glucose</name>
        <dbReference type="ChEBI" id="CHEBI:58885"/>
    </ligand>
</feature>
<feature type="binding site" evidence="1">
    <location>
        <position position="366"/>
    </location>
    <ligand>
        <name>UDP-alpha-D-glucose</name>
        <dbReference type="ChEBI" id="CHEBI:58885"/>
    </ligand>
</feature>
<feature type="binding site" evidence="1">
    <location>
        <position position="369"/>
    </location>
    <ligand>
        <name>UDP-alpha-D-glucose</name>
        <dbReference type="ChEBI" id="CHEBI:58885"/>
    </ligand>
</feature>
<feature type="binding site" evidence="1">
    <location>
        <position position="370"/>
    </location>
    <ligand>
        <name>UDP-alpha-D-glucose</name>
        <dbReference type="ChEBI" id="CHEBI:58885"/>
    </ligand>
</feature>
<feature type="binding site" evidence="1">
    <location>
        <position position="371"/>
    </location>
    <ligand>
        <name>UDP-alpha-D-glucose</name>
        <dbReference type="ChEBI" id="CHEBI:58885"/>
    </ligand>
</feature>
<feature type="binding site" evidence="1">
    <location>
        <position position="374"/>
    </location>
    <ligand>
        <name>UDP-alpha-D-glucose</name>
        <dbReference type="ChEBI" id="CHEBI:58885"/>
    </ligand>
</feature>
<feature type="binding site" evidence="2">
    <location>
        <position position="389"/>
    </location>
    <ligand>
        <name>an anthocyanidin</name>
        <dbReference type="ChEBI" id="CHEBI:143576"/>
    </ligand>
</feature>
<feature type="binding site" evidence="1">
    <location>
        <position position="390"/>
    </location>
    <ligand>
        <name>UDP-alpha-D-glucose</name>
        <dbReference type="ChEBI" id="CHEBI:58885"/>
    </ligand>
</feature>
<feature type="binding site" evidence="1">
    <location>
        <position position="391"/>
    </location>
    <ligand>
        <name>UDP-alpha-D-glucose</name>
        <dbReference type="ChEBI" id="CHEBI:58885"/>
    </ligand>
</feature>
<reference key="1">
    <citation type="journal article" date="2003" name="Plant Physiol.">
        <title>Biochemical and molecular characterization of a novel UDP-glucose:anthocyanin 3'-O-glucosyltransferase, a key enzyme for blue anthocyanin biosynthesis, from gentian.</title>
        <authorList>
            <person name="Fukuchi-Mizutani M."/>
            <person name="Okuhara H."/>
            <person name="Fukui Y."/>
            <person name="Nakao M."/>
            <person name="Katsumoto Y."/>
            <person name="Yonekura-Sakakibara K."/>
            <person name="Kusumi T."/>
            <person name="Hase T."/>
            <person name="Tanaka Y."/>
        </authorList>
    </citation>
    <scope>NUCLEOTIDE SEQUENCE [MRNA]</scope>
    <scope>PROTEIN SEQUENCE OF 109-130; 182-186; 203-211; 347-365 AND 457-471</scope>
    <scope>BIOPHYSICOCHEMICAL PROPERTIES</scope>
    <scope>INDUCTION</scope>
    <scope>TISSUE SPECIFICITY</scope>
    <scope>DEVELOPMENTAL STAGE</scope>
    <source>
        <strain>cv. Japonica</strain>
    </source>
</reference>
<sequence length="482" mass="54041">MDQLHVFFFPFLANGHILPTIDMAKLFSSRGVKATLITTHNNSAIFLKAINRSKILGFDISVLTIKFPSAEFGLPEGYETADQARSIDMMDEFFRACILLQEPLEELLKEHRPQALVADLFFYWANDAAAKFGIPRLLFHGSSSFAMIAAESVRRNKPYKNLSSDSDPFVVPDIPDKIILTKSQVPTPDETEENNTHITEMWKNISESENDCYGVIVNSFYELEPDYVDYCKNVLGRRAWHIGPLSLCNNEGEDVAERGKKSDIDAHECLNWLDSKNPDSVVYVCFGSMANFNAAQLHELAMGLEESGQEFIWVVRTCVDEEDESKWFPDGFEKRVQENNKGLIIKGWAPQVLILEHEAVGAFVSHCGWNSTLEGICGGVAMVTWPLFAEQFYNEKLMTDILRTGVSVGSLQWSRVTTSAVVVKRESISKAVRRLMAEEEGVDIRNRAKALKEKAKKAVEGGGSSYSDLSALLVELSSYPHN</sequence>
<name>ANGT_GENTR</name>
<protein>
    <recommendedName>
        <fullName>Anthocyanin 3'-O-beta-glucosyltransferase</fullName>
        <shortName>3'GT</shortName>
        <ecNumber>2.4.1.238</ecNumber>
    </recommendedName>
</protein>
<organism>
    <name type="scientific">Gentiana triflora</name>
    <name type="common">Clustered gentian</name>
    <dbReference type="NCBI Taxonomy" id="55190"/>
    <lineage>
        <taxon>Eukaryota</taxon>
        <taxon>Viridiplantae</taxon>
        <taxon>Streptophyta</taxon>
        <taxon>Embryophyta</taxon>
        <taxon>Tracheophyta</taxon>
        <taxon>Spermatophyta</taxon>
        <taxon>Magnoliopsida</taxon>
        <taxon>eudicotyledons</taxon>
        <taxon>Gunneridae</taxon>
        <taxon>Pentapetalae</taxon>
        <taxon>asterids</taxon>
        <taxon>lamiids</taxon>
        <taxon>Gentianales</taxon>
        <taxon>Gentianaceae</taxon>
        <taxon>Gentianeae</taxon>
        <taxon>Gentianinae</taxon>
        <taxon>Gentiana</taxon>
    </lineage>
</organism>
<proteinExistence type="evidence at protein level"/>
<accession>Q8H0F2</accession>